<organism>
    <name type="scientific">Apis mellifera</name>
    <name type="common">Honeybee</name>
    <dbReference type="NCBI Taxonomy" id="7460"/>
    <lineage>
        <taxon>Eukaryota</taxon>
        <taxon>Metazoa</taxon>
        <taxon>Ecdysozoa</taxon>
        <taxon>Arthropoda</taxon>
        <taxon>Hexapoda</taxon>
        <taxon>Insecta</taxon>
        <taxon>Pterygota</taxon>
        <taxon>Neoptera</taxon>
        <taxon>Endopterygota</taxon>
        <taxon>Hymenoptera</taxon>
        <taxon>Apocrita</taxon>
        <taxon>Aculeata</taxon>
        <taxon>Apoidea</taxon>
        <taxon>Anthophila</taxon>
        <taxon>Apidae</taxon>
        <taxon>Apis</taxon>
    </lineage>
</organism>
<proteinExistence type="evidence at protein level"/>
<comment type="function">
    <text evidence="2">Chymotrypsin and cathepsin G inhibitor.</text>
</comment>
<comment type="subcellular location">
    <subcellularLocation>
        <location evidence="2">Secreted</location>
    </subcellularLocation>
</comment>
<comment type="similarity">
    <text evidence="4">Belongs to the serine protease inhibitor-like (TIL domain-containing) family.</text>
</comment>
<keyword id="KW-0002">3D-structure</keyword>
<keyword id="KW-0903">Direct protein sequencing</keyword>
<keyword id="KW-1015">Disulfide bond</keyword>
<keyword id="KW-0646">Protease inhibitor</keyword>
<keyword id="KW-1185">Reference proteome</keyword>
<keyword id="KW-0964">Secreted</keyword>
<keyword id="KW-0722">Serine protease inhibitor</keyword>
<sequence>EECGPNEVFNTCGSACAPTCAQPKTRICTMQCRIGCQCQEGFLRNGEGACVLPENC</sequence>
<accession>P56682</accession>
<protein>
    <recommendedName>
        <fullName evidence="3">Chymotrypsin inhibitor</fullName>
        <shortName evidence="3">AMCI</shortName>
    </recommendedName>
</protein>
<evidence type="ECO:0000255" key="1"/>
<evidence type="ECO:0000269" key="2">
    <source>
    </source>
</evidence>
<evidence type="ECO:0000303" key="3">
    <source>
    </source>
</evidence>
<evidence type="ECO:0000305" key="4"/>
<evidence type="ECO:0007744" key="5">
    <source>
        <dbReference type="PDB" id="1CCV"/>
    </source>
</evidence>
<evidence type="ECO:0007829" key="6">
    <source>
        <dbReference type="PDB" id="1CCV"/>
    </source>
</evidence>
<name>TILI_APIME</name>
<feature type="chain" id="PRO_0000174334" description="Chymotrypsin inhibitor" evidence="2">
    <location>
        <begin position="1"/>
        <end position="56"/>
    </location>
</feature>
<feature type="domain" description="TIL" evidence="1">
    <location>
        <begin position="3"/>
        <end position="56"/>
    </location>
</feature>
<feature type="disulfide bond" evidence="2 5">
    <location>
        <begin position="3"/>
        <end position="36"/>
    </location>
</feature>
<feature type="disulfide bond" evidence="2 5">
    <location>
        <begin position="12"/>
        <end position="32"/>
    </location>
</feature>
<feature type="disulfide bond" evidence="2 5">
    <location>
        <begin position="16"/>
        <end position="28"/>
    </location>
</feature>
<feature type="disulfide bond" evidence="2 5">
    <location>
        <begin position="20"/>
        <end position="56"/>
    </location>
</feature>
<feature type="disulfide bond" evidence="2 5">
    <location>
        <begin position="38"/>
        <end position="50"/>
    </location>
</feature>
<feature type="strand" evidence="6">
    <location>
        <begin position="7"/>
        <end position="13"/>
    </location>
</feature>
<feature type="strand" evidence="6">
    <location>
        <begin position="28"/>
        <end position="31"/>
    </location>
</feature>
<feature type="strand" evidence="6">
    <location>
        <begin position="33"/>
        <end position="38"/>
    </location>
</feature>
<feature type="strand" evidence="6">
    <location>
        <begin position="43"/>
        <end position="45"/>
    </location>
</feature>
<feature type="turn" evidence="6">
    <location>
        <begin position="46"/>
        <end position="48"/>
    </location>
</feature>
<feature type="strand" evidence="6">
    <location>
        <begin position="49"/>
        <end position="51"/>
    </location>
</feature>
<feature type="helix" evidence="6">
    <location>
        <begin position="53"/>
        <end position="55"/>
    </location>
</feature>
<dbReference type="PDB" id="1CCV">
    <property type="method" value="NMR"/>
    <property type="chains" value="A=1-56"/>
</dbReference>
<dbReference type="PDBsum" id="1CCV"/>
<dbReference type="BMRB" id="P56682"/>
<dbReference type="SMR" id="P56682"/>
<dbReference type="STRING" id="7460.P56682"/>
<dbReference type="MEROPS" id="I08.008"/>
<dbReference type="PaxDb" id="7460-GB50121-PA"/>
<dbReference type="EnsemblMetazoa" id="XM_006563359">
    <property type="protein sequence ID" value="XP_006563422"/>
    <property type="gene ID" value="LOC725380"/>
</dbReference>
<dbReference type="eggNOG" id="ENOG502SWNJ">
    <property type="taxonomic scope" value="Eukaryota"/>
</dbReference>
<dbReference type="InParanoid" id="P56682"/>
<dbReference type="EvolutionaryTrace" id="P56682"/>
<dbReference type="Proteomes" id="UP000005203">
    <property type="component" value="Unplaced"/>
</dbReference>
<dbReference type="GO" id="GO:0005576">
    <property type="term" value="C:extracellular region"/>
    <property type="evidence" value="ECO:0007669"/>
    <property type="project" value="UniProtKB-SubCell"/>
</dbReference>
<dbReference type="GO" id="GO:0004867">
    <property type="term" value="F:serine-type endopeptidase inhibitor activity"/>
    <property type="evidence" value="ECO:0007669"/>
    <property type="project" value="UniProtKB-KW"/>
</dbReference>
<dbReference type="CDD" id="cd19941">
    <property type="entry name" value="TIL"/>
    <property type="match status" value="1"/>
</dbReference>
<dbReference type="FunFam" id="2.10.25.10:FF:000055">
    <property type="entry name" value="alpha-tectorin isoform X1"/>
    <property type="match status" value="1"/>
</dbReference>
<dbReference type="Gene3D" id="2.10.25.10">
    <property type="entry name" value="Laminin"/>
    <property type="match status" value="1"/>
</dbReference>
<dbReference type="InterPro" id="IPR036084">
    <property type="entry name" value="Ser_inhib-like_sf"/>
</dbReference>
<dbReference type="InterPro" id="IPR051368">
    <property type="entry name" value="SerProtInhib-TIL_Domain"/>
</dbReference>
<dbReference type="InterPro" id="IPR002919">
    <property type="entry name" value="TIL_dom"/>
</dbReference>
<dbReference type="PANTHER" id="PTHR23259:SF70">
    <property type="entry name" value="ACCESSORY GLAND PROTEIN ACP62F-RELATED"/>
    <property type="match status" value="1"/>
</dbReference>
<dbReference type="PANTHER" id="PTHR23259">
    <property type="entry name" value="RIDDLE"/>
    <property type="match status" value="1"/>
</dbReference>
<dbReference type="Pfam" id="PF01826">
    <property type="entry name" value="TIL"/>
    <property type="match status" value="1"/>
</dbReference>
<dbReference type="SUPFAM" id="SSF57567">
    <property type="entry name" value="Serine protease inhibitors"/>
    <property type="match status" value="1"/>
</dbReference>
<reference key="1">
    <citation type="journal article" date="1999" name="Eur. J. Biochem.">
        <title>Primary structure and properties of the cathepsin G/chymotrypsin inhibitor from the larval hemolymph of Apis mellifera.</title>
        <authorList>
            <person name="Bania J."/>
            <person name="Stachowiak D."/>
            <person name="Polanowski A."/>
        </authorList>
    </citation>
    <scope>PROTEIN SEQUENCE</scope>
    <scope>FUNCTION</scope>
    <scope>STRUCTURE BY NMR</scope>
    <scope>DISULFIDE BONDS</scope>
    <scope>SUBCELLULAR LOCATION</scope>
    <source>
        <tissue>Hemolymph</tissue>
    </source>
</reference>